<keyword id="KW-0028">Amino-acid biosynthesis</keyword>
<keyword id="KW-0963">Cytoplasm</keyword>
<keyword id="KW-0554">One-carbon metabolism</keyword>
<keyword id="KW-0663">Pyridoxal phosphate</keyword>
<keyword id="KW-0808">Transferase</keyword>
<reference key="1">
    <citation type="journal article" date="1999" name="Mol. Microbiol.">
        <title>The opcA and (psi)opcB regions in Neisseria: genes, pseudogenes, deletions, insertion elements and DNA islands.</title>
        <authorList>
            <person name="Zhu P."/>
            <person name="Morelli G."/>
            <person name="Achtman M."/>
        </authorList>
    </citation>
    <scope>NUCLEOTIDE SEQUENCE [GENOMIC DNA]</scope>
    <source>
        <strain>MS11</strain>
    </source>
</reference>
<organism>
    <name type="scientific">Neisseria gonorrhoeae</name>
    <dbReference type="NCBI Taxonomy" id="485"/>
    <lineage>
        <taxon>Bacteria</taxon>
        <taxon>Pseudomonadati</taxon>
        <taxon>Pseudomonadota</taxon>
        <taxon>Betaproteobacteria</taxon>
        <taxon>Neisseriales</taxon>
        <taxon>Neisseriaceae</taxon>
        <taxon>Neisseria</taxon>
    </lineage>
</organism>
<comment type="function">
    <text evidence="1">Catalyzes the reversible interconversion of serine and glycine with tetrahydrofolate (THF) serving as the one-carbon carrier. This reaction serves as the major source of one-carbon groups required for the biosynthesis of purines, thymidylate, methionine, and other important biomolecules. Also exhibits THF-independent aldolase activity toward beta-hydroxyamino acids, producing glycine and aldehydes, via a retro-aldol mechanism.</text>
</comment>
<comment type="catalytic activity">
    <reaction evidence="1">
        <text>(6R)-5,10-methylene-5,6,7,8-tetrahydrofolate + glycine + H2O = (6S)-5,6,7,8-tetrahydrofolate + L-serine</text>
        <dbReference type="Rhea" id="RHEA:15481"/>
        <dbReference type="ChEBI" id="CHEBI:15377"/>
        <dbReference type="ChEBI" id="CHEBI:15636"/>
        <dbReference type="ChEBI" id="CHEBI:33384"/>
        <dbReference type="ChEBI" id="CHEBI:57305"/>
        <dbReference type="ChEBI" id="CHEBI:57453"/>
        <dbReference type="EC" id="2.1.2.1"/>
    </reaction>
</comment>
<comment type="cofactor">
    <cofactor evidence="1">
        <name>pyridoxal 5'-phosphate</name>
        <dbReference type="ChEBI" id="CHEBI:597326"/>
    </cofactor>
</comment>
<comment type="pathway">
    <text evidence="1">One-carbon metabolism; tetrahydrofolate interconversion.</text>
</comment>
<comment type="pathway">
    <text evidence="1">Amino-acid biosynthesis; glycine biosynthesis; glycine from L-serine: step 1/1.</text>
</comment>
<comment type="subunit">
    <text evidence="1">Homodimer.</text>
</comment>
<comment type="subcellular location">
    <subcellularLocation>
        <location evidence="1">Cytoplasm</location>
    </subcellularLocation>
</comment>
<comment type="similarity">
    <text evidence="1">Belongs to the SHMT family.</text>
</comment>
<dbReference type="EC" id="2.1.2.1" evidence="1"/>
<dbReference type="EMBL" id="AJ242840">
    <property type="protein sequence ID" value="CAB44942.1"/>
    <property type="molecule type" value="Genomic_DNA"/>
</dbReference>
<dbReference type="RefSeq" id="WP_003688533.1">
    <property type="nucleotide sequence ID" value="NZ_VAHL01000003.1"/>
</dbReference>
<dbReference type="SMR" id="Q9XB01"/>
<dbReference type="UniPathway" id="UPA00193"/>
<dbReference type="UniPathway" id="UPA00288">
    <property type="reaction ID" value="UER01023"/>
</dbReference>
<dbReference type="GO" id="GO:0005829">
    <property type="term" value="C:cytosol"/>
    <property type="evidence" value="ECO:0007669"/>
    <property type="project" value="TreeGrafter"/>
</dbReference>
<dbReference type="GO" id="GO:0004372">
    <property type="term" value="F:glycine hydroxymethyltransferase activity"/>
    <property type="evidence" value="ECO:0007669"/>
    <property type="project" value="UniProtKB-UniRule"/>
</dbReference>
<dbReference type="GO" id="GO:0030170">
    <property type="term" value="F:pyridoxal phosphate binding"/>
    <property type="evidence" value="ECO:0007669"/>
    <property type="project" value="UniProtKB-UniRule"/>
</dbReference>
<dbReference type="GO" id="GO:0019264">
    <property type="term" value="P:glycine biosynthetic process from serine"/>
    <property type="evidence" value="ECO:0007669"/>
    <property type="project" value="UniProtKB-UniRule"/>
</dbReference>
<dbReference type="GO" id="GO:0035999">
    <property type="term" value="P:tetrahydrofolate interconversion"/>
    <property type="evidence" value="ECO:0007669"/>
    <property type="project" value="UniProtKB-UniRule"/>
</dbReference>
<dbReference type="CDD" id="cd00378">
    <property type="entry name" value="SHMT"/>
    <property type="match status" value="1"/>
</dbReference>
<dbReference type="FunFam" id="3.40.640.10:FF:000001">
    <property type="entry name" value="Serine hydroxymethyltransferase"/>
    <property type="match status" value="1"/>
</dbReference>
<dbReference type="FunFam" id="3.90.1150.10:FF:000003">
    <property type="entry name" value="Serine hydroxymethyltransferase"/>
    <property type="match status" value="1"/>
</dbReference>
<dbReference type="Gene3D" id="3.90.1150.10">
    <property type="entry name" value="Aspartate Aminotransferase, domain 1"/>
    <property type="match status" value="1"/>
</dbReference>
<dbReference type="Gene3D" id="3.40.640.10">
    <property type="entry name" value="Type I PLP-dependent aspartate aminotransferase-like (Major domain)"/>
    <property type="match status" value="1"/>
</dbReference>
<dbReference type="HAMAP" id="MF_00051">
    <property type="entry name" value="SHMT"/>
    <property type="match status" value="1"/>
</dbReference>
<dbReference type="InterPro" id="IPR015424">
    <property type="entry name" value="PyrdxlP-dep_Trfase"/>
</dbReference>
<dbReference type="InterPro" id="IPR015421">
    <property type="entry name" value="PyrdxlP-dep_Trfase_major"/>
</dbReference>
<dbReference type="InterPro" id="IPR015422">
    <property type="entry name" value="PyrdxlP-dep_Trfase_small"/>
</dbReference>
<dbReference type="InterPro" id="IPR001085">
    <property type="entry name" value="Ser_HO-MeTrfase"/>
</dbReference>
<dbReference type="InterPro" id="IPR049943">
    <property type="entry name" value="Ser_HO-MeTrfase-like"/>
</dbReference>
<dbReference type="InterPro" id="IPR019798">
    <property type="entry name" value="Ser_HO-MeTrfase_PLP_BS"/>
</dbReference>
<dbReference type="InterPro" id="IPR039429">
    <property type="entry name" value="SHMT-like_dom"/>
</dbReference>
<dbReference type="NCBIfam" id="NF000586">
    <property type="entry name" value="PRK00011.1"/>
    <property type="match status" value="1"/>
</dbReference>
<dbReference type="PANTHER" id="PTHR11680">
    <property type="entry name" value="SERINE HYDROXYMETHYLTRANSFERASE"/>
    <property type="match status" value="1"/>
</dbReference>
<dbReference type="PANTHER" id="PTHR11680:SF50">
    <property type="entry name" value="SERINE HYDROXYMETHYLTRANSFERASE"/>
    <property type="match status" value="1"/>
</dbReference>
<dbReference type="Pfam" id="PF00464">
    <property type="entry name" value="SHMT"/>
    <property type="match status" value="1"/>
</dbReference>
<dbReference type="PIRSF" id="PIRSF000412">
    <property type="entry name" value="SHMT"/>
    <property type="match status" value="1"/>
</dbReference>
<dbReference type="SUPFAM" id="SSF53383">
    <property type="entry name" value="PLP-dependent transferases"/>
    <property type="match status" value="1"/>
</dbReference>
<dbReference type="PROSITE" id="PS00096">
    <property type="entry name" value="SHMT"/>
    <property type="match status" value="1"/>
</dbReference>
<name>GLYA_NEIGO</name>
<sequence>MFSKSVTLAQYDPDLAAAIAQEDRRQQDHVELIASENYVSCAVMEAQGSQLTNKYAEGYPAKRYYGGCEYVDIVEQLAIDRVKELFGAAYANVQPHSGSQANQAVYASVLKPGDTILGMSLAHGGHLTHGASVNISGKLYNAVTYGLDENEVLDYAEVERLALEHKPKMIVAGASAYALQIDWAKFREIADKVGAYLFVDMAHYAGLVAGGEYPNPVPFCDFVTTTTHKTLRGPRGGVILCRDNTHEKALNSSIFPSLQGGPLMHVIAAKAVAFKEALQPEFKQYAKQVKINAAVMAEELVKRGLRIVSGRTESHVFLVDLQPMKITGKAAEAALGKAHITVNKNAIPNDPEKPFVTSGIRIGSAAMTTRGFNETDARVLSNLVADVLANPEDEANLAKVCGQVTALCDKYPVYGN</sequence>
<protein>
    <recommendedName>
        <fullName evidence="1">Serine hydroxymethyltransferase</fullName>
        <shortName evidence="1">SHMT</shortName>
        <shortName evidence="1">Serine methylase</shortName>
        <ecNumber evidence="1">2.1.2.1</ecNumber>
    </recommendedName>
</protein>
<evidence type="ECO:0000255" key="1">
    <source>
        <dbReference type="HAMAP-Rule" id="MF_00051"/>
    </source>
</evidence>
<proteinExistence type="inferred from homology"/>
<accession>Q9XB01</accession>
<accession>Q9S370</accession>
<feature type="chain" id="PRO_0000113621" description="Serine hydroxymethyltransferase">
    <location>
        <begin position="1"/>
        <end position="416"/>
    </location>
</feature>
<feature type="binding site" evidence="1">
    <location>
        <position position="121"/>
    </location>
    <ligand>
        <name>(6S)-5,6,7,8-tetrahydrofolate</name>
        <dbReference type="ChEBI" id="CHEBI:57453"/>
    </ligand>
</feature>
<feature type="binding site" evidence="1">
    <location>
        <begin position="125"/>
        <end position="127"/>
    </location>
    <ligand>
        <name>(6S)-5,6,7,8-tetrahydrofolate</name>
        <dbReference type="ChEBI" id="CHEBI:57453"/>
    </ligand>
</feature>
<feature type="site" description="Plays an important role in substrate specificity" evidence="1">
    <location>
        <position position="228"/>
    </location>
</feature>
<feature type="modified residue" description="N6-(pyridoxal phosphate)lysine" evidence="1">
    <location>
        <position position="229"/>
    </location>
</feature>
<gene>
    <name evidence="1" type="primary">glyA</name>
</gene>